<reference key="1">
    <citation type="journal article" date="2014" name="Stand. Genomic Sci.">
        <title>Complete genome sequence of Anabaena variabilis ATCC 29413.</title>
        <authorList>
            <person name="Thiel T."/>
            <person name="Pratte B.S."/>
            <person name="Zhong J."/>
            <person name="Goodwin L."/>
            <person name="Copeland A."/>
            <person name="Lucas S."/>
            <person name="Han C."/>
            <person name="Pitluck S."/>
            <person name="Land M.L."/>
            <person name="Kyrpides N.C."/>
            <person name="Woyke T."/>
        </authorList>
    </citation>
    <scope>NUCLEOTIDE SEQUENCE [LARGE SCALE GENOMIC DNA]</scope>
    <source>
        <strain>ATCC 29413 / PCC 7937</strain>
    </source>
</reference>
<organism>
    <name type="scientific">Trichormus variabilis (strain ATCC 29413 / PCC 7937)</name>
    <name type="common">Anabaena variabilis</name>
    <dbReference type="NCBI Taxonomy" id="240292"/>
    <lineage>
        <taxon>Bacteria</taxon>
        <taxon>Bacillati</taxon>
        <taxon>Cyanobacteriota</taxon>
        <taxon>Cyanophyceae</taxon>
        <taxon>Nostocales</taxon>
        <taxon>Nostocaceae</taxon>
        <taxon>Trichormus</taxon>
    </lineage>
</organism>
<dbReference type="EC" id="2.7.7.8" evidence="1"/>
<dbReference type="EMBL" id="CP000117">
    <property type="protein sequence ID" value="ABA22887.1"/>
    <property type="molecule type" value="Genomic_DNA"/>
</dbReference>
<dbReference type="SMR" id="Q3M7Z9"/>
<dbReference type="STRING" id="240292.Ava_3279"/>
<dbReference type="KEGG" id="ava:Ava_3279"/>
<dbReference type="eggNOG" id="COG1185">
    <property type="taxonomic scope" value="Bacteria"/>
</dbReference>
<dbReference type="HOGENOM" id="CLU_004217_2_2_3"/>
<dbReference type="Proteomes" id="UP000002533">
    <property type="component" value="Chromosome"/>
</dbReference>
<dbReference type="GO" id="GO:0005829">
    <property type="term" value="C:cytosol"/>
    <property type="evidence" value="ECO:0007669"/>
    <property type="project" value="TreeGrafter"/>
</dbReference>
<dbReference type="GO" id="GO:0000175">
    <property type="term" value="F:3'-5'-RNA exonuclease activity"/>
    <property type="evidence" value="ECO:0007669"/>
    <property type="project" value="TreeGrafter"/>
</dbReference>
<dbReference type="GO" id="GO:0000287">
    <property type="term" value="F:magnesium ion binding"/>
    <property type="evidence" value="ECO:0007669"/>
    <property type="project" value="UniProtKB-UniRule"/>
</dbReference>
<dbReference type="GO" id="GO:0004654">
    <property type="term" value="F:polyribonucleotide nucleotidyltransferase activity"/>
    <property type="evidence" value="ECO:0007669"/>
    <property type="project" value="UniProtKB-UniRule"/>
</dbReference>
<dbReference type="GO" id="GO:0003723">
    <property type="term" value="F:RNA binding"/>
    <property type="evidence" value="ECO:0007669"/>
    <property type="project" value="UniProtKB-UniRule"/>
</dbReference>
<dbReference type="GO" id="GO:0006402">
    <property type="term" value="P:mRNA catabolic process"/>
    <property type="evidence" value="ECO:0007669"/>
    <property type="project" value="UniProtKB-UniRule"/>
</dbReference>
<dbReference type="GO" id="GO:0006396">
    <property type="term" value="P:RNA processing"/>
    <property type="evidence" value="ECO:0007669"/>
    <property type="project" value="InterPro"/>
</dbReference>
<dbReference type="CDD" id="cd02393">
    <property type="entry name" value="KH-I_PNPase"/>
    <property type="match status" value="1"/>
</dbReference>
<dbReference type="CDD" id="cd11363">
    <property type="entry name" value="RNase_PH_PNPase_1"/>
    <property type="match status" value="1"/>
</dbReference>
<dbReference type="CDD" id="cd11364">
    <property type="entry name" value="RNase_PH_PNPase_2"/>
    <property type="match status" value="1"/>
</dbReference>
<dbReference type="CDD" id="cd04472">
    <property type="entry name" value="S1_PNPase"/>
    <property type="match status" value="1"/>
</dbReference>
<dbReference type="FunFam" id="3.30.1370.10:FF:000001">
    <property type="entry name" value="Polyribonucleotide nucleotidyltransferase"/>
    <property type="match status" value="1"/>
</dbReference>
<dbReference type="FunFam" id="3.30.230.70:FF:000001">
    <property type="entry name" value="Polyribonucleotide nucleotidyltransferase"/>
    <property type="match status" value="1"/>
</dbReference>
<dbReference type="FunFam" id="3.30.230.70:FF:000002">
    <property type="entry name" value="Polyribonucleotide nucleotidyltransferase"/>
    <property type="match status" value="1"/>
</dbReference>
<dbReference type="Gene3D" id="3.30.230.70">
    <property type="entry name" value="GHMP Kinase, N-terminal domain"/>
    <property type="match status" value="2"/>
</dbReference>
<dbReference type="Gene3D" id="3.30.1370.10">
    <property type="entry name" value="K Homology domain, type 1"/>
    <property type="match status" value="1"/>
</dbReference>
<dbReference type="Gene3D" id="2.40.50.140">
    <property type="entry name" value="Nucleic acid-binding proteins"/>
    <property type="match status" value="1"/>
</dbReference>
<dbReference type="HAMAP" id="MF_01595">
    <property type="entry name" value="PNPase"/>
    <property type="match status" value="1"/>
</dbReference>
<dbReference type="InterPro" id="IPR001247">
    <property type="entry name" value="ExoRNase_PH_dom1"/>
</dbReference>
<dbReference type="InterPro" id="IPR015847">
    <property type="entry name" value="ExoRNase_PH_dom2"/>
</dbReference>
<dbReference type="InterPro" id="IPR036345">
    <property type="entry name" value="ExoRNase_PH_dom2_sf"/>
</dbReference>
<dbReference type="InterPro" id="IPR004087">
    <property type="entry name" value="KH_dom"/>
</dbReference>
<dbReference type="InterPro" id="IPR004088">
    <property type="entry name" value="KH_dom_type_1"/>
</dbReference>
<dbReference type="InterPro" id="IPR036612">
    <property type="entry name" value="KH_dom_type_1_sf"/>
</dbReference>
<dbReference type="InterPro" id="IPR012340">
    <property type="entry name" value="NA-bd_OB-fold"/>
</dbReference>
<dbReference type="InterPro" id="IPR012162">
    <property type="entry name" value="PNPase"/>
</dbReference>
<dbReference type="InterPro" id="IPR027408">
    <property type="entry name" value="PNPase/RNase_PH_dom_sf"/>
</dbReference>
<dbReference type="InterPro" id="IPR015848">
    <property type="entry name" value="PNPase_PH_RNA-bd_bac/org-type"/>
</dbReference>
<dbReference type="InterPro" id="IPR036456">
    <property type="entry name" value="PNPase_PH_RNA-bd_sf"/>
</dbReference>
<dbReference type="InterPro" id="IPR020568">
    <property type="entry name" value="Ribosomal_Su5_D2-typ_SF"/>
</dbReference>
<dbReference type="InterPro" id="IPR003029">
    <property type="entry name" value="S1_domain"/>
</dbReference>
<dbReference type="NCBIfam" id="TIGR03591">
    <property type="entry name" value="polynuc_phos"/>
    <property type="match status" value="1"/>
</dbReference>
<dbReference type="NCBIfam" id="NF008805">
    <property type="entry name" value="PRK11824.1"/>
    <property type="match status" value="1"/>
</dbReference>
<dbReference type="PANTHER" id="PTHR11252">
    <property type="entry name" value="POLYRIBONUCLEOTIDE NUCLEOTIDYLTRANSFERASE"/>
    <property type="match status" value="1"/>
</dbReference>
<dbReference type="PANTHER" id="PTHR11252:SF0">
    <property type="entry name" value="POLYRIBONUCLEOTIDE NUCLEOTIDYLTRANSFERASE 1, MITOCHONDRIAL"/>
    <property type="match status" value="1"/>
</dbReference>
<dbReference type="Pfam" id="PF00013">
    <property type="entry name" value="KH_1"/>
    <property type="match status" value="1"/>
</dbReference>
<dbReference type="Pfam" id="PF03726">
    <property type="entry name" value="PNPase"/>
    <property type="match status" value="1"/>
</dbReference>
<dbReference type="Pfam" id="PF01138">
    <property type="entry name" value="RNase_PH"/>
    <property type="match status" value="2"/>
</dbReference>
<dbReference type="Pfam" id="PF03725">
    <property type="entry name" value="RNase_PH_C"/>
    <property type="match status" value="2"/>
</dbReference>
<dbReference type="Pfam" id="PF00575">
    <property type="entry name" value="S1"/>
    <property type="match status" value="1"/>
</dbReference>
<dbReference type="PIRSF" id="PIRSF005499">
    <property type="entry name" value="PNPase"/>
    <property type="match status" value="1"/>
</dbReference>
<dbReference type="SMART" id="SM00322">
    <property type="entry name" value="KH"/>
    <property type="match status" value="1"/>
</dbReference>
<dbReference type="SMART" id="SM00316">
    <property type="entry name" value="S1"/>
    <property type="match status" value="1"/>
</dbReference>
<dbReference type="SUPFAM" id="SSF54791">
    <property type="entry name" value="Eukaryotic type KH-domain (KH-domain type I)"/>
    <property type="match status" value="1"/>
</dbReference>
<dbReference type="SUPFAM" id="SSF50249">
    <property type="entry name" value="Nucleic acid-binding proteins"/>
    <property type="match status" value="1"/>
</dbReference>
<dbReference type="SUPFAM" id="SSF46915">
    <property type="entry name" value="Polynucleotide phosphorylase/guanosine pentaphosphate synthase (PNPase/GPSI), domain 3"/>
    <property type="match status" value="1"/>
</dbReference>
<dbReference type="SUPFAM" id="SSF55666">
    <property type="entry name" value="Ribonuclease PH domain 2-like"/>
    <property type="match status" value="2"/>
</dbReference>
<dbReference type="SUPFAM" id="SSF54211">
    <property type="entry name" value="Ribosomal protein S5 domain 2-like"/>
    <property type="match status" value="2"/>
</dbReference>
<dbReference type="PROSITE" id="PS50084">
    <property type="entry name" value="KH_TYPE_1"/>
    <property type="match status" value="1"/>
</dbReference>
<dbReference type="PROSITE" id="PS50126">
    <property type="entry name" value="S1"/>
    <property type="match status" value="1"/>
</dbReference>
<sequence>MAEFEKSISFDGRDIRLKVGLLAPQAGGSVLIESGDTAVLVTATRSAGREGIDFLPLTVDYEERLYAAGRIPGGIMRREGRPPEKTILTSRLIDRPLRPLFPSWLRDDLQIVALTMSMDEQVPPDVLAVTGASIATLIAKIPFNGPMAAVRVGLVGDDFIINPTYAEIEAGDLDLVVAGSPHGVIMVEAGANQLPERDIIEAIDFGYEAVRDLIKAQLDLVAELGLEIVQEAPPEVDQTLENYIRDRASDEIKKILAQFELTKPERDAALDVVKDNIATAIAELPEEDPIRLAATANSKALGNTFKDITKYFMRRQIVEDNVRVDGRKLDQVRPVSSQVGVLPKRVHGSGLFNRGLTQVLSACTLGTPGDAQNLNDDLQTDQSKRYLHHYNFPPFSVGETKPLRAPGRREIGHGALAERAILPVLPPKEQFPYVIRVVSEVLSSNGSTSMGSVCGSTLALMDAGVPILKPVSGAAMGLIKEGDEVRVLTDIQGIEDFLGDMDFKVAGTDAGITALQMDMKISGLSLEVIAQAIHQAKDARLHILDKMLQTIDTPRTETSPYAPRLLTIKIDPDMIGLVIGPGGKTIKGITEETGAKIDIEDDGTVTISAVDENKAKRARNIVQGMTRKLNEGDVYAGRVTRIIPIGAFVEFLPGKEGMIHISQLADYRVGKVEDEVAVGDEVIVKVREIDNKGRINLTRLGIHPDQAAAAREAAAVNR</sequence>
<comment type="function">
    <text evidence="1">Involved in mRNA degradation. Catalyzes the phosphorolysis of single-stranded polyribonucleotides processively in the 3'- to 5'-direction.</text>
</comment>
<comment type="catalytic activity">
    <reaction evidence="1">
        <text>RNA(n+1) + phosphate = RNA(n) + a ribonucleoside 5'-diphosphate</text>
        <dbReference type="Rhea" id="RHEA:22096"/>
        <dbReference type="Rhea" id="RHEA-COMP:14527"/>
        <dbReference type="Rhea" id="RHEA-COMP:17342"/>
        <dbReference type="ChEBI" id="CHEBI:43474"/>
        <dbReference type="ChEBI" id="CHEBI:57930"/>
        <dbReference type="ChEBI" id="CHEBI:140395"/>
        <dbReference type="EC" id="2.7.7.8"/>
    </reaction>
</comment>
<comment type="cofactor">
    <cofactor evidence="1">
        <name>Mg(2+)</name>
        <dbReference type="ChEBI" id="CHEBI:18420"/>
    </cofactor>
</comment>
<comment type="subcellular location">
    <subcellularLocation>
        <location evidence="1">Cytoplasm</location>
    </subcellularLocation>
</comment>
<comment type="similarity">
    <text evidence="1">Belongs to the polyribonucleotide nucleotidyltransferase family.</text>
</comment>
<gene>
    <name evidence="1" type="primary">pnp</name>
    <name type="ordered locus">Ava_3279</name>
</gene>
<keyword id="KW-0963">Cytoplasm</keyword>
<keyword id="KW-0460">Magnesium</keyword>
<keyword id="KW-0479">Metal-binding</keyword>
<keyword id="KW-0548">Nucleotidyltransferase</keyword>
<keyword id="KW-0694">RNA-binding</keyword>
<keyword id="KW-0808">Transferase</keyword>
<name>PNP_TRIV2</name>
<evidence type="ECO:0000255" key="1">
    <source>
        <dbReference type="HAMAP-Rule" id="MF_01595"/>
    </source>
</evidence>
<proteinExistence type="inferred from homology"/>
<protein>
    <recommendedName>
        <fullName evidence="1">Polyribonucleotide nucleotidyltransferase</fullName>
        <ecNumber evidence="1">2.7.7.8</ecNumber>
    </recommendedName>
    <alternativeName>
        <fullName evidence="1">Polynucleotide phosphorylase</fullName>
        <shortName evidence="1">PNPase</shortName>
    </alternativeName>
</protein>
<feature type="chain" id="PRO_0000329497" description="Polyribonucleotide nucleotidyltransferase">
    <location>
        <begin position="1"/>
        <end position="718"/>
    </location>
</feature>
<feature type="domain" description="KH" evidence="1">
    <location>
        <begin position="563"/>
        <end position="622"/>
    </location>
</feature>
<feature type="domain" description="S1 motif" evidence="1">
    <location>
        <begin position="632"/>
        <end position="700"/>
    </location>
</feature>
<feature type="binding site" evidence="1">
    <location>
        <position position="496"/>
    </location>
    <ligand>
        <name>Mg(2+)</name>
        <dbReference type="ChEBI" id="CHEBI:18420"/>
    </ligand>
</feature>
<feature type="binding site" evidence="1">
    <location>
        <position position="502"/>
    </location>
    <ligand>
        <name>Mg(2+)</name>
        <dbReference type="ChEBI" id="CHEBI:18420"/>
    </ligand>
</feature>
<accession>Q3M7Z9</accession>